<feature type="chain" id="PRO_0000298239" description="Ion-translocating oxidoreductase complex subunit D">
    <location>
        <begin position="1"/>
        <end position="352"/>
    </location>
</feature>
<feature type="transmembrane region" description="Helical" evidence="1">
    <location>
        <begin position="20"/>
        <end position="40"/>
    </location>
</feature>
<feature type="transmembrane region" description="Helical" evidence="1">
    <location>
        <begin position="42"/>
        <end position="62"/>
    </location>
</feature>
<feature type="transmembrane region" description="Helical" evidence="1">
    <location>
        <begin position="78"/>
        <end position="109"/>
    </location>
</feature>
<feature type="transmembrane region" description="Helical" evidence="1">
    <location>
        <begin position="123"/>
        <end position="143"/>
    </location>
</feature>
<feature type="transmembrane region" description="Helical" evidence="1">
    <location>
        <begin position="148"/>
        <end position="168"/>
    </location>
</feature>
<feature type="transmembrane region" description="Helical" evidence="1">
    <location>
        <begin position="214"/>
        <end position="234"/>
    </location>
</feature>
<feature type="transmembrane region" description="Helical" evidence="1">
    <location>
        <begin position="242"/>
        <end position="262"/>
    </location>
</feature>
<feature type="transmembrane region" description="Helical" evidence="1">
    <location>
        <begin position="267"/>
        <end position="287"/>
    </location>
</feature>
<feature type="transmembrane region" description="Helical" evidence="1">
    <location>
        <begin position="301"/>
        <end position="321"/>
    </location>
</feature>
<feature type="transmembrane region" description="Helical" evidence="1">
    <location>
        <begin position="322"/>
        <end position="342"/>
    </location>
</feature>
<feature type="modified residue" description="FMN phosphoryl threonine" evidence="1">
    <location>
        <position position="187"/>
    </location>
</feature>
<organism>
    <name type="scientific">Shigella dysenteriae serotype 1 (strain Sd197)</name>
    <dbReference type="NCBI Taxonomy" id="300267"/>
    <lineage>
        <taxon>Bacteria</taxon>
        <taxon>Pseudomonadati</taxon>
        <taxon>Pseudomonadota</taxon>
        <taxon>Gammaproteobacteria</taxon>
        <taxon>Enterobacterales</taxon>
        <taxon>Enterobacteriaceae</taxon>
        <taxon>Shigella</taxon>
    </lineage>
</organism>
<protein>
    <recommendedName>
        <fullName evidence="1">Ion-translocating oxidoreductase complex subunit D</fullName>
        <ecNumber evidence="1">7.-.-.-</ecNumber>
    </recommendedName>
    <alternativeName>
        <fullName evidence="1">Rsx electron transport complex subunit D</fullName>
    </alternativeName>
</protein>
<proteinExistence type="inferred from homology"/>
<dbReference type="EC" id="7.-.-.-" evidence="1"/>
<dbReference type="EMBL" id="CP000034">
    <property type="protein sequence ID" value="ABB61962.1"/>
    <property type="molecule type" value="Genomic_DNA"/>
</dbReference>
<dbReference type="RefSeq" id="WP_000231916.1">
    <property type="nucleotide sequence ID" value="NC_007606.1"/>
</dbReference>
<dbReference type="RefSeq" id="YP_403453.1">
    <property type="nucleotide sequence ID" value="NC_007606.1"/>
</dbReference>
<dbReference type="SMR" id="Q32FE3"/>
<dbReference type="STRING" id="300267.SDY_1853"/>
<dbReference type="EnsemblBacteria" id="ABB61962">
    <property type="protein sequence ID" value="ABB61962"/>
    <property type="gene ID" value="SDY_1853"/>
</dbReference>
<dbReference type="KEGG" id="sdy:SDY_1853"/>
<dbReference type="PATRIC" id="fig|300267.13.peg.2232"/>
<dbReference type="HOGENOM" id="CLU_042020_0_0_6"/>
<dbReference type="Proteomes" id="UP000002716">
    <property type="component" value="Chromosome"/>
</dbReference>
<dbReference type="GO" id="GO:0005886">
    <property type="term" value="C:plasma membrane"/>
    <property type="evidence" value="ECO:0007669"/>
    <property type="project" value="UniProtKB-SubCell"/>
</dbReference>
<dbReference type="GO" id="GO:0022900">
    <property type="term" value="P:electron transport chain"/>
    <property type="evidence" value="ECO:0007669"/>
    <property type="project" value="UniProtKB-UniRule"/>
</dbReference>
<dbReference type="GO" id="GO:0055085">
    <property type="term" value="P:transmembrane transport"/>
    <property type="evidence" value="ECO:0007669"/>
    <property type="project" value="InterPro"/>
</dbReference>
<dbReference type="HAMAP" id="MF_00462">
    <property type="entry name" value="RsxD_RnfD"/>
    <property type="match status" value="1"/>
</dbReference>
<dbReference type="InterPro" id="IPR004338">
    <property type="entry name" value="NqrB/RnfD"/>
</dbReference>
<dbReference type="InterPro" id="IPR011303">
    <property type="entry name" value="RnfD_bac"/>
</dbReference>
<dbReference type="NCBIfam" id="NF002011">
    <property type="entry name" value="PRK00816.1"/>
    <property type="match status" value="1"/>
</dbReference>
<dbReference type="NCBIfam" id="TIGR01946">
    <property type="entry name" value="rnfD"/>
    <property type="match status" value="1"/>
</dbReference>
<dbReference type="PANTHER" id="PTHR30578">
    <property type="entry name" value="ELECTRON TRANSPORT COMPLEX PROTEIN RNFD"/>
    <property type="match status" value="1"/>
</dbReference>
<dbReference type="PANTHER" id="PTHR30578:SF0">
    <property type="entry name" value="ION-TRANSLOCATING OXIDOREDUCTASE COMPLEX SUBUNIT D"/>
    <property type="match status" value="1"/>
</dbReference>
<dbReference type="Pfam" id="PF03116">
    <property type="entry name" value="NQR2_RnfD_RnfE"/>
    <property type="match status" value="1"/>
</dbReference>
<keyword id="KW-0997">Cell inner membrane</keyword>
<keyword id="KW-1003">Cell membrane</keyword>
<keyword id="KW-0249">Electron transport</keyword>
<keyword id="KW-0285">Flavoprotein</keyword>
<keyword id="KW-0288">FMN</keyword>
<keyword id="KW-0472">Membrane</keyword>
<keyword id="KW-0597">Phosphoprotein</keyword>
<keyword id="KW-1185">Reference proteome</keyword>
<keyword id="KW-1278">Translocase</keyword>
<keyword id="KW-0812">Transmembrane</keyword>
<keyword id="KW-1133">Transmembrane helix</keyword>
<keyword id="KW-0813">Transport</keyword>
<comment type="function">
    <text evidence="1">Part of a membrane-bound complex that couples electron transfer with translocation of ions across the membrane. Required to maintain the reduced state of SoxR.</text>
</comment>
<comment type="cofactor">
    <cofactor evidence="1">
        <name>FMN</name>
        <dbReference type="ChEBI" id="CHEBI:58210"/>
    </cofactor>
</comment>
<comment type="subunit">
    <text evidence="1">The complex is composed of six subunits: RsxA, RsxB, RsxC, RsxD, RsxE and RsxG.</text>
</comment>
<comment type="subcellular location">
    <subcellularLocation>
        <location evidence="1">Cell inner membrane</location>
        <topology evidence="1">Multi-pass membrane protein</topology>
    </subcellularLocation>
</comment>
<comment type="similarity">
    <text evidence="1">Belongs to the NqrB/RnfD family.</text>
</comment>
<evidence type="ECO:0000255" key="1">
    <source>
        <dbReference type="HAMAP-Rule" id="MF_00462"/>
    </source>
</evidence>
<reference key="1">
    <citation type="journal article" date="2005" name="Nucleic Acids Res.">
        <title>Genome dynamics and diversity of Shigella species, the etiologic agents of bacillary dysentery.</title>
        <authorList>
            <person name="Yang F."/>
            <person name="Yang J."/>
            <person name="Zhang X."/>
            <person name="Chen L."/>
            <person name="Jiang Y."/>
            <person name="Yan Y."/>
            <person name="Tang X."/>
            <person name="Wang J."/>
            <person name="Xiong Z."/>
            <person name="Dong J."/>
            <person name="Xue Y."/>
            <person name="Zhu Y."/>
            <person name="Xu X."/>
            <person name="Sun L."/>
            <person name="Chen S."/>
            <person name="Nie H."/>
            <person name="Peng J."/>
            <person name="Xu J."/>
            <person name="Wang Y."/>
            <person name="Yuan Z."/>
            <person name="Wen Y."/>
            <person name="Yao Z."/>
            <person name="Shen Y."/>
            <person name="Qiang B."/>
            <person name="Hou Y."/>
            <person name="Yu J."/>
            <person name="Jin Q."/>
        </authorList>
    </citation>
    <scope>NUCLEOTIDE SEQUENCE [LARGE SCALE GENOMIC DNA]</scope>
    <source>
        <strain>Sd197</strain>
    </source>
</reference>
<gene>
    <name evidence="1" type="primary">rsxD</name>
    <name type="ordered locus">SDY_1853</name>
</gene>
<accession>Q32FE3</accession>
<sequence length="352" mass="38126">MVFRIASSPYTHNQRQTSRIMLLVLLAAVPGIAAQLWFFGWGTLVQILLASVSALLAEALVLKLRKQSVAATLKDNSALLTGLLLAVSIPPLAPWWMVVLGTVFAVIIAKQLYGGLGQNPFNPAMIGYVVLLISFPVQMTSWLPPHEIAVNILGFIDAIQVIFSGHTASGGDMNTLRLGIDGISQATPLDTFKTSVRAGHSVEQIMQYPIYSGILAGAGWQWVNLAWLAGGVWLLWQKAIRWHIPLSFLVTLALCATLGWLFSPETLAAPQIHLLSGATMLGAFFILTDPVTASTTNRGRLIFGALAGLLVWLIRSFGGYPDGVAFAVLLANITVPLIDYYTRPRVYGHRKG</sequence>
<name>RSXD_SHIDS</name>